<feature type="chain" id="PRO_0000167324" description="Small ribosomal subunit protein bS16m">
    <location>
        <begin position="1"/>
        <end position="107"/>
    </location>
</feature>
<organism>
    <name type="scientific">Neurospora crassa (strain ATCC 24698 / 74-OR23-1A / CBS 708.71 / DSM 1257 / FGSC 987)</name>
    <dbReference type="NCBI Taxonomy" id="367110"/>
    <lineage>
        <taxon>Eukaryota</taxon>
        <taxon>Fungi</taxon>
        <taxon>Dikarya</taxon>
        <taxon>Ascomycota</taxon>
        <taxon>Pezizomycotina</taxon>
        <taxon>Sordariomycetes</taxon>
        <taxon>Sordariomycetidae</taxon>
        <taxon>Sordariales</taxon>
        <taxon>Sordariaceae</taxon>
        <taxon>Neurospora</taxon>
    </lineage>
</organism>
<name>RT16_NEUCR</name>
<comment type="function">
    <text evidence="4">Component of the mitochondrial ribosome (mitoribosome), a dedicated translation machinery responsible for the synthesis of mitochondrial genome-encoded proteins, including at least some of the essential transmembrane subunits of the mitochondrial respiratory chain. The mitoribosomes are attached to the mitochondrial inner membrane and translation products are cotranslationally integrated into the membrane.</text>
</comment>
<comment type="subunit">
    <text evidence="1">Component of the mitochondrial small ribosomal subunit (mt-SSU). Mature N.crassa 74S mitochondrial ribosomes consist of a small (37S) and a large (54S) subunit. The 37S small subunit contains a 16S ribosomal RNA (16S mt-rRNA) and 32 different proteins. The 54S large subunit contains a 23S rRNA (23S mt-rRNA) and 42 different proteins.</text>
</comment>
<comment type="subcellular location">
    <subcellularLocation>
        <location evidence="1">Mitochondrion</location>
    </subcellularLocation>
</comment>
<comment type="similarity">
    <text evidence="3">Belongs to the bacterial ribosomal protein bS16 family.</text>
</comment>
<gene>
    <name type="primary">cyt-21</name>
    <name type="synonym">mrps16</name>
    <name type="ORF">NCU08071</name>
</gene>
<protein>
    <recommendedName>
        <fullName evidence="2">Small ribosomal subunit protein bS16m</fullName>
    </recommendedName>
    <alternativeName>
        <fullName>Ribosomal protein S16, mitochondrial</fullName>
    </alternativeName>
    <alternativeName>
        <fullName>S24</fullName>
    </alternativeName>
</protein>
<reference key="1">
    <citation type="journal article" date="1988" name="J. Biol. Chem.">
        <title>Isolation and analysis of the Neurospora crassa Cyt-21 gene. A nuclear gene encoding a mitochondrial ribosomal protein.</title>
        <authorList>
            <person name="Kuiper M.T.R."/>
            <person name="Akins R.A."/>
            <person name="Holtrop M."/>
            <person name="de Vries H."/>
            <person name="Lambowitz A.M."/>
        </authorList>
    </citation>
    <scope>NUCLEOTIDE SEQUENCE [GENOMIC DNA]</scope>
    <source>
        <strain>ATCC 24698 / 74-OR23-1A / CBS 708.71 / DSM 1257 / FGSC 987</strain>
    </source>
</reference>
<reference key="2">
    <citation type="journal article" date="2003" name="Nature">
        <title>The genome sequence of the filamentous fungus Neurospora crassa.</title>
        <authorList>
            <person name="Galagan J.E."/>
            <person name="Calvo S.E."/>
            <person name="Borkovich K.A."/>
            <person name="Selker E.U."/>
            <person name="Read N.D."/>
            <person name="Jaffe D.B."/>
            <person name="FitzHugh W."/>
            <person name="Ma L.-J."/>
            <person name="Smirnov S."/>
            <person name="Purcell S."/>
            <person name="Rehman B."/>
            <person name="Elkins T."/>
            <person name="Engels R."/>
            <person name="Wang S."/>
            <person name="Nielsen C.B."/>
            <person name="Butler J."/>
            <person name="Endrizzi M."/>
            <person name="Qui D."/>
            <person name="Ianakiev P."/>
            <person name="Bell-Pedersen D."/>
            <person name="Nelson M.A."/>
            <person name="Werner-Washburne M."/>
            <person name="Selitrennikoff C.P."/>
            <person name="Kinsey J.A."/>
            <person name="Braun E.L."/>
            <person name="Zelter A."/>
            <person name="Schulte U."/>
            <person name="Kothe G.O."/>
            <person name="Jedd G."/>
            <person name="Mewes H.-W."/>
            <person name="Staben C."/>
            <person name="Marcotte E."/>
            <person name="Greenberg D."/>
            <person name="Roy A."/>
            <person name="Foley K."/>
            <person name="Naylor J."/>
            <person name="Stange-Thomann N."/>
            <person name="Barrett R."/>
            <person name="Gnerre S."/>
            <person name="Kamal M."/>
            <person name="Kamvysselis M."/>
            <person name="Mauceli E.W."/>
            <person name="Bielke C."/>
            <person name="Rudd S."/>
            <person name="Frishman D."/>
            <person name="Krystofova S."/>
            <person name="Rasmussen C."/>
            <person name="Metzenberg R.L."/>
            <person name="Perkins D.D."/>
            <person name="Kroken S."/>
            <person name="Cogoni C."/>
            <person name="Macino G."/>
            <person name="Catcheside D.E.A."/>
            <person name="Li W."/>
            <person name="Pratt R.J."/>
            <person name="Osmani S.A."/>
            <person name="DeSouza C.P.C."/>
            <person name="Glass N.L."/>
            <person name="Orbach M.J."/>
            <person name="Berglund J.A."/>
            <person name="Voelker R."/>
            <person name="Yarden O."/>
            <person name="Plamann M."/>
            <person name="Seiler S."/>
            <person name="Dunlap J.C."/>
            <person name="Radford A."/>
            <person name="Aramayo R."/>
            <person name="Natvig D.O."/>
            <person name="Alex L.A."/>
            <person name="Mannhaupt G."/>
            <person name="Ebbole D.J."/>
            <person name="Freitag M."/>
            <person name="Paulsen I."/>
            <person name="Sachs M.S."/>
            <person name="Lander E.S."/>
            <person name="Nusbaum C."/>
            <person name="Birren B.W."/>
        </authorList>
    </citation>
    <scope>NUCLEOTIDE SEQUENCE [LARGE SCALE GENOMIC DNA]</scope>
    <source>
        <strain>ATCC 24698 / 74-OR23-1A / CBS 708.71 / DSM 1257 / FGSC 987</strain>
    </source>
</reference>
<reference evidence="5 6" key="3">
    <citation type="journal article" date="2020" name="Nat. Commun.">
        <title>Analysis of translating mitoribosome reveals functional characteristics of translation in mitochondria of fungi.</title>
        <authorList>
            <person name="Itoh Y."/>
            <person name="Naschberger A."/>
            <person name="Mortezaei N."/>
            <person name="Herrmann J.M."/>
            <person name="Amunts A."/>
        </authorList>
    </citation>
    <scope>STRUCTURE BY ELECTRON MICROSCOPY (2.85 ANGSTROMS)</scope>
</reference>
<keyword id="KW-0002">3D-structure</keyword>
<keyword id="KW-0496">Mitochondrion</keyword>
<keyword id="KW-1185">Reference proteome</keyword>
<keyword id="KW-0687">Ribonucleoprotein</keyword>
<keyword id="KW-0689">Ribosomal protein</keyword>
<evidence type="ECO:0000269" key="1">
    <source>
    </source>
</evidence>
<evidence type="ECO:0000303" key="2">
    <source>
    </source>
</evidence>
<evidence type="ECO:0000305" key="3"/>
<evidence type="ECO:0000305" key="4">
    <source>
    </source>
</evidence>
<evidence type="ECO:0007744" key="5">
    <source>
        <dbReference type="PDB" id="6YW5"/>
    </source>
</evidence>
<evidence type="ECO:0007744" key="6">
    <source>
        <dbReference type="PDB" id="6YWX"/>
    </source>
</evidence>
<accession>P08580</accession>
<accession>Q7RVL9</accession>
<dbReference type="EMBL" id="X06360">
    <property type="protein sequence ID" value="CAA29659.1"/>
    <property type="molecule type" value="Genomic_DNA"/>
</dbReference>
<dbReference type="EMBL" id="CM002236">
    <property type="protein sequence ID" value="EAA35966.1"/>
    <property type="molecule type" value="Genomic_DNA"/>
</dbReference>
<dbReference type="PIR" id="A29927">
    <property type="entry name" value="A29927"/>
</dbReference>
<dbReference type="RefSeq" id="XP_965202.1">
    <property type="nucleotide sequence ID" value="XM_960109.2"/>
</dbReference>
<dbReference type="PDB" id="6YW5">
    <property type="method" value="EM"/>
    <property type="resolution" value="2.85 A"/>
    <property type="chains" value="PP=1-107"/>
</dbReference>
<dbReference type="PDB" id="6YWX">
    <property type="method" value="EM"/>
    <property type="resolution" value="3.10 A"/>
    <property type="chains" value="PP=1-107"/>
</dbReference>
<dbReference type="PDBsum" id="6YW5"/>
<dbReference type="PDBsum" id="6YWX"/>
<dbReference type="EMDB" id="EMD-10958"/>
<dbReference type="EMDB" id="EMD-10978"/>
<dbReference type="SMR" id="P08580"/>
<dbReference type="FunCoup" id="P08580">
    <property type="interactions" value="707"/>
</dbReference>
<dbReference type="STRING" id="367110.P08580"/>
<dbReference type="PaxDb" id="5141-EFNCRP00000008512"/>
<dbReference type="EnsemblFungi" id="EAA35966">
    <property type="protein sequence ID" value="EAA35966"/>
    <property type="gene ID" value="NCU08071"/>
</dbReference>
<dbReference type="GeneID" id="3881382"/>
<dbReference type="KEGG" id="ncr:NCU08071"/>
<dbReference type="VEuPathDB" id="FungiDB:NCU08071"/>
<dbReference type="HOGENOM" id="CLU_100590_2_2_1"/>
<dbReference type="InParanoid" id="P08580"/>
<dbReference type="OMA" id="GFYNPIA"/>
<dbReference type="OrthoDB" id="407221at2759"/>
<dbReference type="Proteomes" id="UP000001805">
    <property type="component" value="Chromosome 1, Linkage Group I"/>
</dbReference>
<dbReference type="GO" id="GO:0005763">
    <property type="term" value="C:mitochondrial small ribosomal subunit"/>
    <property type="evidence" value="ECO:0000318"/>
    <property type="project" value="GO_Central"/>
</dbReference>
<dbReference type="GO" id="GO:0003735">
    <property type="term" value="F:structural constituent of ribosome"/>
    <property type="evidence" value="ECO:0000318"/>
    <property type="project" value="GO_Central"/>
</dbReference>
<dbReference type="GO" id="GO:0006412">
    <property type="term" value="P:translation"/>
    <property type="evidence" value="ECO:0007669"/>
    <property type="project" value="InterPro"/>
</dbReference>
<dbReference type="FunFam" id="3.30.1320.10:FF:000012">
    <property type="entry name" value="37S ribosomal protein S16"/>
    <property type="match status" value="1"/>
</dbReference>
<dbReference type="Gene3D" id="3.30.1320.10">
    <property type="match status" value="1"/>
</dbReference>
<dbReference type="HAMAP" id="MF_00385">
    <property type="entry name" value="Ribosomal_bS16"/>
    <property type="match status" value="1"/>
</dbReference>
<dbReference type="InterPro" id="IPR000307">
    <property type="entry name" value="Ribosomal_bS16"/>
</dbReference>
<dbReference type="InterPro" id="IPR020592">
    <property type="entry name" value="Ribosomal_bS16_CS"/>
</dbReference>
<dbReference type="InterPro" id="IPR023803">
    <property type="entry name" value="Ribosomal_bS16_dom_sf"/>
</dbReference>
<dbReference type="NCBIfam" id="TIGR00002">
    <property type="entry name" value="S16"/>
    <property type="match status" value="1"/>
</dbReference>
<dbReference type="PANTHER" id="PTHR12919">
    <property type="entry name" value="30S RIBOSOMAL PROTEIN S16"/>
    <property type="match status" value="1"/>
</dbReference>
<dbReference type="PANTHER" id="PTHR12919:SF20">
    <property type="entry name" value="SMALL RIBOSOMAL SUBUNIT PROTEIN BS16M"/>
    <property type="match status" value="1"/>
</dbReference>
<dbReference type="Pfam" id="PF00886">
    <property type="entry name" value="Ribosomal_S16"/>
    <property type="match status" value="1"/>
</dbReference>
<dbReference type="SUPFAM" id="SSF54565">
    <property type="entry name" value="Ribosomal protein S16"/>
    <property type="match status" value="1"/>
</dbReference>
<dbReference type="PROSITE" id="PS00732">
    <property type="entry name" value="RIBOSOMAL_S16"/>
    <property type="match status" value="1"/>
</dbReference>
<sequence>MVLKLRLARFGRTNAPFYNIVVAHARTARNSKPLEVIGTYDPVPKKDTYDTTGKLHKDIKLDVTRAKYWIGVGAQPTDTVWRLLSLVGILDPKYKKPQPAQEQKTKA</sequence>
<proteinExistence type="evidence at protein level"/>